<comment type="function">
    <text evidence="2">Catalyzes the formation of N(7)-methylguanine at position 46 (m7G46) in tRNA.</text>
</comment>
<comment type="catalytic activity">
    <reaction evidence="2">
        <text>guanosine(46) in tRNA + S-adenosyl-L-methionine = N(7)-methylguanosine(46) in tRNA + S-adenosyl-L-homocysteine</text>
        <dbReference type="Rhea" id="RHEA:42708"/>
        <dbReference type="Rhea" id="RHEA-COMP:10188"/>
        <dbReference type="Rhea" id="RHEA-COMP:10189"/>
        <dbReference type="ChEBI" id="CHEBI:57856"/>
        <dbReference type="ChEBI" id="CHEBI:59789"/>
        <dbReference type="ChEBI" id="CHEBI:74269"/>
        <dbReference type="ChEBI" id="CHEBI:74480"/>
        <dbReference type="EC" id="2.1.1.33"/>
    </reaction>
</comment>
<comment type="pathway">
    <text evidence="2">tRNA modification; N(7)-methylguanine-tRNA biosynthesis.</text>
</comment>
<comment type="similarity">
    <text evidence="2">Belongs to the class I-like SAM-binding methyltransferase superfamily. TrmB family.</text>
</comment>
<keyword id="KW-0489">Methyltransferase</keyword>
<keyword id="KW-1185">Reference proteome</keyword>
<keyword id="KW-0949">S-adenosyl-L-methionine</keyword>
<keyword id="KW-0808">Transferase</keyword>
<keyword id="KW-0819">tRNA processing</keyword>
<evidence type="ECO:0000250" key="1"/>
<evidence type="ECO:0000255" key="2">
    <source>
        <dbReference type="HAMAP-Rule" id="MF_01057"/>
    </source>
</evidence>
<accession>Q46HD3</accession>
<sequence>MRQHVNPLSQFFQLPLSLPSKNILFEKSHYPIHLDIGSAKGEFLIELATKCPDWNFVGLEIREPLVSLCEKKRRKLELTNLKFLFCNVNVSLDEWLSDLDFGQLKRVSIQFPDPWFKRKHFKRRVLKTNILNSIAKAMSKNGEIFIQSDIFELIEYMTNTIDENRYFTRKNVGDLRSINKNPYNVMTDREILSLKKNLLIYRVMYIRNSLLFTN</sequence>
<dbReference type="EC" id="2.1.1.33" evidence="2"/>
<dbReference type="EMBL" id="CP000095">
    <property type="protein sequence ID" value="AAZ59095.1"/>
    <property type="molecule type" value="Genomic_DNA"/>
</dbReference>
<dbReference type="RefSeq" id="WP_011294240.1">
    <property type="nucleotide sequence ID" value="NC_007335.2"/>
</dbReference>
<dbReference type="SMR" id="Q46HD3"/>
<dbReference type="STRING" id="59920.PMN2A_1607"/>
<dbReference type="KEGG" id="pmn:PMN2A_1607"/>
<dbReference type="HOGENOM" id="CLU_050910_1_3_3"/>
<dbReference type="OrthoDB" id="9802090at2"/>
<dbReference type="PhylomeDB" id="Q46HD3"/>
<dbReference type="UniPathway" id="UPA00989"/>
<dbReference type="Proteomes" id="UP000002535">
    <property type="component" value="Chromosome"/>
</dbReference>
<dbReference type="GO" id="GO:0043527">
    <property type="term" value="C:tRNA methyltransferase complex"/>
    <property type="evidence" value="ECO:0007669"/>
    <property type="project" value="TreeGrafter"/>
</dbReference>
<dbReference type="GO" id="GO:0008176">
    <property type="term" value="F:tRNA (guanine(46)-N7)-methyltransferase activity"/>
    <property type="evidence" value="ECO:0007669"/>
    <property type="project" value="UniProtKB-UniRule"/>
</dbReference>
<dbReference type="CDD" id="cd02440">
    <property type="entry name" value="AdoMet_MTases"/>
    <property type="match status" value="1"/>
</dbReference>
<dbReference type="Gene3D" id="3.40.50.150">
    <property type="entry name" value="Vaccinia Virus protein VP39"/>
    <property type="match status" value="1"/>
</dbReference>
<dbReference type="HAMAP" id="MF_01057">
    <property type="entry name" value="tRNA_methyltr_TrmB"/>
    <property type="match status" value="1"/>
</dbReference>
<dbReference type="InterPro" id="IPR029063">
    <property type="entry name" value="SAM-dependent_MTases_sf"/>
</dbReference>
<dbReference type="InterPro" id="IPR003358">
    <property type="entry name" value="tRNA_(Gua-N-7)_MeTrfase_Trmb"/>
</dbReference>
<dbReference type="InterPro" id="IPR055361">
    <property type="entry name" value="tRNA_methyltr_TrmB_bact"/>
</dbReference>
<dbReference type="NCBIfam" id="TIGR00091">
    <property type="entry name" value="tRNA (guanosine(46)-N7)-methyltransferase TrmB"/>
    <property type="match status" value="1"/>
</dbReference>
<dbReference type="PANTHER" id="PTHR23417">
    <property type="entry name" value="3-DEOXY-D-MANNO-OCTULOSONIC-ACID TRANSFERASE/TRNA GUANINE-N 7 - -METHYLTRANSFERASE"/>
    <property type="match status" value="1"/>
</dbReference>
<dbReference type="PANTHER" id="PTHR23417:SF21">
    <property type="entry name" value="TRNA (GUANINE-N(7)-)-METHYLTRANSFERASE"/>
    <property type="match status" value="1"/>
</dbReference>
<dbReference type="Pfam" id="PF02390">
    <property type="entry name" value="Methyltransf_4"/>
    <property type="match status" value="1"/>
</dbReference>
<dbReference type="SUPFAM" id="SSF53335">
    <property type="entry name" value="S-adenosyl-L-methionine-dependent methyltransferases"/>
    <property type="match status" value="1"/>
</dbReference>
<dbReference type="PROSITE" id="PS51625">
    <property type="entry name" value="SAM_MT_TRMB"/>
    <property type="match status" value="1"/>
</dbReference>
<reference key="1">
    <citation type="journal article" date="2007" name="PLoS Genet.">
        <title>Patterns and implications of gene gain and loss in the evolution of Prochlorococcus.</title>
        <authorList>
            <person name="Kettler G.C."/>
            <person name="Martiny A.C."/>
            <person name="Huang K."/>
            <person name="Zucker J."/>
            <person name="Coleman M.L."/>
            <person name="Rodrigue S."/>
            <person name="Chen F."/>
            <person name="Lapidus A."/>
            <person name="Ferriera S."/>
            <person name="Johnson J."/>
            <person name="Steglich C."/>
            <person name="Church G.M."/>
            <person name="Richardson P."/>
            <person name="Chisholm S.W."/>
        </authorList>
    </citation>
    <scope>NUCLEOTIDE SEQUENCE [LARGE SCALE GENOMIC DNA]</scope>
    <source>
        <strain>NATL2A</strain>
    </source>
</reference>
<gene>
    <name evidence="2" type="primary">trmB</name>
    <name type="ordered locus">PMN2A_1607</name>
</gene>
<protein>
    <recommendedName>
        <fullName evidence="2">tRNA (guanine-N(7)-)-methyltransferase</fullName>
        <ecNumber evidence="2">2.1.1.33</ecNumber>
    </recommendedName>
    <alternativeName>
        <fullName evidence="2">tRNA (guanine(46)-N(7))-methyltransferase</fullName>
    </alternativeName>
    <alternativeName>
        <fullName evidence="2">tRNA(m7G46)-methyltransferase</fullName>
    </alternativeName>
</protein>
<name>TRMB_PROMT</name>
<proteinExistence type="inferred from homology"/>
<organism>
    <name type="scientific">Prochlorococcus marinus (strain NATL2A)</name>
    <dbReference type="NCBI Taxonomy" id="59920"/>
    <lineage>
        <taxon>Bacteria</taxon>
        <taxon>Bacillati</taxon>
        <taxon>Cyanobacteriota</taxon>
        <taxon>Cyanophyceae</taxon>
        <taxon>Synechococcales</taxon>
        <taxon>Prochlorococcaceae</taxon>
        <taxon>Prochlorococcus</taxon>
    </lineage>
</organism>
<feature type="chain" id="PRO_0000229183" description="tRNA (guanine-N(7)-)-methyltransferase">
    <location>
        <begin position="1"/>
        <end position="214"/>
    </location>
</feature>
<feature type="active site" evidence="1">
    <location>
        <position position="113"/>
    </location>
</feature>
<feature type="binding site" evidence="2">
    <location>
        <position position="35"/>
    </location>
    <ligand>
        <name>S-adenosyl-L-methionine</name>
        <dbReference type="ChEBI" id="CHEBI:59789"/>
    </ligand>
</feature>
<feature type="binding site" evidence="2">
    <location>
        <position position="60"/>
    </location>
    <ligand>
        <name>S-adenosyl-L-methionine</name>
        <dbReference type="ChEBI" id="CHEBI:59789"/>
    </ligand>
</feature>
<feature type="binding site" evidence="2">
    <location>
        <position position="87"/>
    </location>
    <ligand>
        <name>S-adenosyl-L-methionine</name>
        <dbReference type="ChEBI" id="CHEBI:59789"/>
    </ligand>
</feature>
<feature type="binding site" evidence="2">
    <location>
        <position position="113"/>
    </location>
    <ligand>
        <name>S-adenosyl-L-methionine</name>
        <dbReference type="ChEBI" id="CHEBI:59789"/>
    </ligand>
</feature>
<feature type="binding site" evidence="2">
    <location>
        <position position="117"/>
    </location>
    <ligand>
        <name>substrate</name>
    </ligand>
</feature>
<feature type="binding site" evidence="2">
    <location>
        <position position="149"/>
    </location>
    <ligand>
        <name>substrate</name>
    </ligand>
</feature>